<sequence>MLTIGVLGLQGAVREHIRSIEACGSKGVVIKRPEQLDDIDGLILPGGESTTMRRLMDTYHFMEPLREFAAQGKPMFGTCAGLIILAKEIAGTDNAHLGLLNVVVERNSFGRQVDSFEADLTIKGLDEPFTGVFIRAPHILEAGEDVEVLCEHNGRIVAAKQGNFLGCSFHPELTDDHRVTELFVKMAEKHKQETAV</sequence>
<proteinExistence type="inferred from homology"/>
<protein>
    <recommendedName>
        <fullName evidence="1">Pyridoxal 5'-phosphate synthase subunit PdxT</fullName>
        <ecNumber evidence="1">4.3.3.6</ecNumber>
    </recommendedName>
    <alternativeName>
        <fullName evidence="1">Pdx2</fullName>
    </alternativeName>
    <alternativeName>
        <fullName evidence="1">Pyridoxal 5'-phosphate synthase glutaminase subunit</fullName>
        <ecNumber evidence="1">3.5.1.2</ecNumber>
    </alternativeName>
</protein>
<accession>A7Z0D4</accession>
<reference key="1">
    <citation type="journal article" date="2007" name="Nat. Biotechnol.">
        <title>Comparative analysis of the complete genome sequence of the plant growth-promoting bacterium Bacillus amyloliquefaciens FZB42.</title>
        <authorList>
            <person name="Chen X.H."/>
            <person name="Koumoutsi A."/>
            <person name="Scholz R."/>
            <person name="Eisenreich A."/>
            <person name="Schneider K."/>
            <person name="Heinemeyer I."/>
            <person name="Morgenstern B."/>
            <person name="Voss B."/>
            <person name="Hess W.R."/>
            <person name="Reva O."/>
            <person name="Junge H."/>
            <person name="Voigt B."/>
            <person name="Jungblut P.R."/>
            <person name="Vater J."/>
            <person name="Suessmuth R."/>
            <person name="Liesegang H."/>
            <person name="Strittmatter A."/>
            <person name="Gottschalk G."/>
            <person name="Borriss R."/>
        </authorList>
    </citation>
    <scope>NUCLEOTIDE SEQUENCE [LARGE SCALE GENOMIC DNA]</scope>
    <source>
        <strain>DSM 23117 / BGSC 10A6 / LMG 26770 / FZB42</strain>
    </source>
</reference>
<keyword id="KW-0315">Glutamine amidotransferase</keyword>
<keyword id="KW-0378">Hydrolase</keyword>
<keyword id="KW-0456">Lyase</keyword>
<keyword id="KW-0663">Pyridoxal phosphate</keyword>
<organism>
    <name type="scientific">Bacillus velezensis (strain DSM 23117 / BGSC 10A6 / LMG 26770 / FZB42)</name>
    <name type="common">Bacillus amyloliquefaciens subsp. plantarum</name>
    <dbReference type="NCBI Taxonomy" id="326423"/>
    <lineage>
        <taxon>Bacteria</taxon>
        <taxon>Bacillati</taxon>
        <taxon>Bacillota</taxon>
        <taxon>Bacilli</taxon>
        <taxon>Bacillales</taxon>
        <taxon>Bacillaceae</taxon>
        <taxon>Bacillus</taxon>
        <taxon>Bacillus amyloliquefaciens group</taxon>
    </lineage>
</organism>
<comment type="function">
    <text evidence="1">Catalyzes the hydrolysis of glutamine to glutamate and ammonia as part of the biosynthesis of pyridoxal 5'-phosphate. The resulting ammonia molecule is channeled to the active site of PdxS.</text>
</comment>
<comment type="catalytic activity">
    <reaction evidence="1">
        <text>aldehydo-D-ribose 5-phosphate + D-glyceraldehyde 3-phosphate + L-glutamine = pyridoxal 5'-phosphate + L-glutamate + phosphate + 3 H2O + H(+)</text>
        <dbReference type="Rhea" id="RHEA:31507"/>
        <dbReference type="ChEBI" id="CHEBI:15377"/>
        <dbReference type="ChEBI" id="CHEBI:15378"/>
        <dbReference type="ChEBI" id="CHEBI:29985"/>
        <dbReference type="ChEBI" id="CHEBI:43474"/>
        <dbReference type="ChEBI" id="CHEBI:58273"/>
        <dbReference type="ChEBI" id="CHEBI:58359"/>
        <dbReference type="ChEBI" id="CHEBI:59776"/>
        <dbReference type="ChEBI" id="CHEBI:597326"/>
        <dbReference type="EC" id="4.3.3.6"/>
    </reaction>
</comment>
<comment type="catalytic activity">
    <reaction evidence="1">
        <text>L-glutamine + H2O = L-glutamate + NH4(+)</text>
        <dbReference type="Rhea" id="RHEA:15889"/>
        <dbReference type="ChEBI" id="CHEBI:15377"/>
        <dbReference type="ChEBI" id="CHEBI:28938"/>
        <dbReference type="ChEBI" id="CHEBI:29985"/>
        <dbReference type="ChEBI" id="CHEBI:58359"/>
        <dbReference type="EC" id="3.5.1.2"/>
    </reaction>
</comment>
<comment type="pathway">
    <text evidence="1">Cofactor biosynthesis; pyridoxal 5'-phosphate biosynthesis.</text>
</comment>
<comment type="subunit">
    <text evidence="1">In the presence of PdxS, forms a dodecamer of heterodimers. Only shows activity in the heterodimer.</text>
</comment>
<comment type="similarity">
    <text evidence="1">Belongs to the glutaminase PdxT/SNO family.</text>
</comment>
<name>PDXT_BACVZ</name>
<feature type="chain" id="PRO_1000088042" description="Pyridoxal 5'-phosphate synthase subunit PdxT">
    <location>
        <begin position="1"/>
        <end position="196"/>
    </location>
</feature>
<feature type="active site" description="Nucleophile" evidence="1">
    <location>
        <position position="79"/>
    </location>
</feature>
<feature type="active site" description="Charge relay system" evidence="1">
    <location>
        <position position="170"/>
    </location>
</feature>
<feature type="active site" description="Charge relay system" evidence="1">
    <location>
        <position position="172"/>
    </location>
</feature>
<feature type="binding site" evidence="1">
    <location>
        <begin position="47"/>
        <end position="49"/>
    </location>
    <ligand>
        <name>L-glutamine</name>
        <dbReference type="ChEBI" id="CHEBI:58359"/>
    </ligand>
</feature>
<feature type="binding site" evidence="1">
    <location>
        <position position="106"/>
    </location>
    <ligand>
        <name>L-glutamine</name>
        <dbReference type="ChEBI" id="CHEBI:58359"/>
    </ligand>
</feature>
<feature type="binding site" evidence="1">
    <location>
        <begin position="134"/>
        <end position="135"/>
    </location>
    <ligand>
        <name>L-glutamine</name>
        <dbReference type="ChEBI" id="CHEBI:58359"/>
    </ligand>
</feature>
<evidence type="ECO:0000255" key="1">
    <source>
        <dbReference type="HAMAP-Rule" id="MF_01615"/>
    </source>
</evidence>
<dbReference type="EC" id="4.3.3.6" evidence="1"/>
<dbReference type="EC" id="3.5.1.2" evidence="1"/>
<dbReference type="EMBL" id="CP000560">
    <property type="protein sequence ID" value="ABS72460.1"/>
    <property type="molecule type" value="Genomic_DNA"/>
</dbReference>
<dbReference type="RefSeq" id="WP_011996157.1">
    <property type="nucleotide sequence ID" value="NC_009725.2"/>
</dbReference>
<dbReference type="SMR" id="A7Z0D4"/>
<dbReference type="MEROPS" id="C26.A32"/>
<dbReference type="GeneID" id="93079153"/>
<dbReference type="KEGG" id="bay:RBAM_000150"/>
<dbReference type="HOGENOM" id="CLU_069674_2_0_9"/>
<dbReference type="UniPathway" id="UPA00245"/>
<dbReference type="Proteomes" id="UP000001120">
    <property type="component" value="Chromosome"/>
</dbReference>
<dbReference type="GO" id="GO:0005829">
    <property type="term" value="C:cytosol"/>
    <property type="evidence" value="ECO:0007669"/>
    <property type="project" value="TreeGrafter"/>
</dbReference>
<dbReference type="GO" id="GO:1903600">
    <property type="term" value="C:glutaminase complex"/>
    <property type="evidence" value="ECO:0007669"/>
    <property type="project" value="TreeGrafter"/>
</dbReference>
<dbReference type="GO" id="GO:0004359">
    <property type="term" value="F:glutaminase activity"/>
    <property type="evidence" value="ECO:0007669"/>
    <property type="project" value="UniProtKB-UniRule"/>
</dbReference>
<dbReference type="GO" id="GO:0036381">
    <property type="term" value="F:pyridoxal 5'-phosphate synthase (glutamine hydrolysing) activity"/>
    <property type="evidence" value="ECO:0007669"/>
    <property type="project" value="UniProtKB-UniRule"/>
</dbReference>
<dbReference type="GO" id="GO:0006543">
    <property type="term" value="P:glutamine catabolic process"/>
    <property type="evidence" value="ECO:0007669"/>
    <property type="project" value="UniProtKB-UniRule"/>
</dbReference>
<dbReference type="GO" id="GO:0042823">
    <property type="term" value="P:pyridoxal phosphate biosynthetic process"/>
    <property type="evidence" value="ECO:0007669"/>
    <property type="project" value="UniProtKB-UniRule"/>
</dbReference>
<dbReference type="GO" id="GO:0008614">
    <property type="term" value="P:pyridoxine metabolic process"/>
    <property type="evidence" value="ECO:0007669"/>
    <property type="project" value="TreeGrafter"/>
</dbReference>
<dbReference type="CDD" id="cd01749">
    <property type="entry name" value="GATase1_PB"/>
    <property type="match status" value="1"/>
</dbReference>
<dbReference type="FunFam" id="3.40.50.880:FF:000010">
    <property type="entry name" value="uncharacterized protein LOC100176842 isoform X2"/>
    <property type="match status" value="1"/>
</dbReference>
<dbReference type="Gene3D" id="3.40.50.880">
    <property type="match status" value="1"/>
</dbReference>
<dbReference type="HAMAP" id="MF_01615">
    <property type="entry name" value="PdxT"/>
    <property type="match status" value="1"/>
</dbReference>
<dbReference type="InterPro" id="IPR029062">
    <property type="entry name" value="Class_I_gatase-like"/>
</dbReference>
<dbReference type="InterPro" id="IPR002161">
    <property type="entry name" value="PdxT/SNO"/>
</dbReference>
<dbReference type="InterPro" id="IPR021196">
    <property type="entry name" value="PdxT/SNO_CS"/>
</dbReference>
<dbReference type="NCBIfam" id="TIGR03800">
    <property type="entry name" value="PLP_synth_Pdx2"/>
    <property type="match status" value="1"/>
</dbReference>
<dbReference type="PANTHER" id="PTHR31559">
    <property type="entry name" value="PYRIDOXAL 5'-PHOSPHATE SYNTHASE SUBUNIT SNO"/>
    <property type="match status" value="1"/>
</dbReference>
<dbReference type="PANTHER" id="PTHR31559:SF0">
    <property type="entry name" value="PYRIDOXAL 5'-PHOSPHATE SYNTHASE SUBUNIT SNO1-RELATED"/>
    <property type="match status" value="1"/>
</dbReference>
<dbReference type="Pfam" id="PF01174">
    <property type="entry name" value="SNO"/>
    <property type="match status" value="1"/>
</dbReference>
<dbReference type="PIRSF" id="PIRSF005639">
    <property type="entry name" value="Glut_amidoT_SNO"/>
    <property type="match status" value="1"/>
</dbReference>
<dbReference type="SUPFAM" id="SSF52317">
    <property type="entry name" value="Class I glutamine amidotransferase-like"/>
    <property type="match status" value="1"/>
</dbReference>
<dbReference type="PROSITE" id="PS01236">
    <property type="entry name" value="PDXT_SNO_1"/>
    <property type="match status" value="1"/>
</dbReference>
<dbReference type="PROSITE" id="PS51130">
    <property type="entry name" value="PDXT_SNO_2"/>
    <property type="match status" value="1"/>
</dbReference>
<gene>
    <name evidence="1" type="primary">pdxT</name>
    <name type="ordered locus">RBAM_000150</name>
</gene>